<accession>B1Y9B8</accession>
<reference key="1">
    <citation type="submission" date="2008-03" db="EMBL/GenBank/DDBJ databases">
        <title>Complete sequence of Thermoproteus neutrophilus V24Sta.</title>
        <authorList>
            <consortium name="US DOE Joint Genome Institute"/>
            <person name="Copeland A."/>
            <person name="Lucas S."/>
            <person name="Lapidus A."/>
            <person name="Glavina del Rio T."/>
            <person name="Dalin E."/>
            <person name="Tice H."/>
            <person name="Bruce D."/>
            <person name="Goodwin L."/>
            <person name="Pitluck S."/>
            <person name="Sims D."/>
            <person name="Brettin T."/>
            <person name="Detter J.C."/>
            <person name="Han C."/>
            <person name="Kuske C.R."/>
            <person name="Schmutz J."/>
            <person name="Larimer F."/>
            <person name="Land M."/>
            <person name="Hauser L."/>
            <person name="Kyrpides N."/>
            <person name="Mikhailova N."/>
            <person name="Biddle J.F."/>
            <person name="Zhang Z."/>
            <person name="Fitz-Gibbon S.T."/>
            <person name="Lowe T.M."/>
            <person name="Saltikov C."/>
            <person name="House C.H."/>
            <person name="Richardson P."/>
        </authorList>
    </citation>
    <scope>NUCLEOTIDE SEQUENCE [LARGE SCALE GENOMIC DNA]</scope>
    <source>
        <strain>DSM 2338 / JCM 9278 / NBRC 100436 / V24Sta</strain>
    </source>
</reference>
<keyword id="KW-0687">Ribonucleoprotein</keyword>
<keyword id="KW-0689">Ribosomal protein</keyword>
<keyword id="KW-0694">RNA-binding</keyword>
<keyword id="KW-0699">rRNA-binding</keyword>
<evidence type="ECO:0000255" key="1">
    <source>
        <dbReference type="HAMAP-Rule" id="MF_01306"/>
    </source>
</evidence>
<evidence type="ECO:0000305" key="2"/>
<gene>
    <name evidence="1" type="primary">rps4</name>
    <name type="ordered locus">Tneu_1422</name>
</gene>
<sequence length="159" mass="18460">MGGLKKPKKKYLAGKPKKIWNKQLLLEELQLMGEYGLRNKKELWLARAHLKWIVRRARSLLSMTAEERAPLELPFKEKLYKMGFIEDPNVPLDRVLSLDVRAILERRLQTIVYRMGLAKSIYHARQLIVHGHIAVAGRRVSSPGFLVPRELEDKISLIQ</sequence>
<dbReference type="EMBL" id="CP001014">
    <property type="protein sequence ID" value="ACB40347.1"/>
    <property type="molecule type" value="Genomic_DNA"/>
</dbReference>
<dbReference type="RefSeq" id="WP_012350766.1">
    <property type="nucleotide sequence ID" value="NC_010525.1"/>
</dbReference>
<dbReference type="SMR" id="B1Y9B8"/>
<dbReference type="STRING" id="444157.Tneu_1422"/>
<dbReference type="GeneID" id="6164329"/>
<dbReference type="KEGG" id="tne:Tneu_1422"/>
<dbReference type="eggNOG" id="arCOG04239">
    <property type="taxonomic scope" value="Archaea"/>
</dbReference>
<dbReference type="HOGENOM" id="CLU_089738_1_1_2"/>
<dbReference type="OrthoDB" id="10429at2157"/>
<dbReference type="Proteomes" id="UP000001694">
    <property type="component" value="Chromosome"/>
</dbReference>
<dbReference type="GO" id="GO:0015935">
    <property type="term" value="C:small ribosomal subunit"/>
    <property type="evidence" value="ECO:0007669"/>
    <property type="project" value="InterPro"/>
</dbReference>
<dbReference type="GO" id="GO:0019843">
    <property type="term" value="F:rRNA binding"/>
    <property type="evidence" value="ECO:0007669"/>
    <property type="project" value="UniProtKB-UniRule"/>
</dbReference>
<dbReference type="GO" id="GO:0003735">
    <property type="term" value="F:structural constituent of ribosome"/>
    <property type="evidence" value="ECO:0007669"/>
    <property type="project" value="InterPro"/>
</dbReference>
<dbReference type="GO" id="GO:0042274">
    <property type="term" value="P:ribosomal small subunit biogenesis"/>
    <property type="evidence" value="ECO:0007669"/>
    <property type="project" value="TreeGrafter"/>
</dbReference>
<dbReference type="GO" id="GO:0006412">
    <property type="term" value="P:translation"/>
    <property type="evidence" value="ECO:0007669"/>
    <property type="project" value="UniProtKB-UniRule"/>
</dbReference>
<dbReference type="CDD" id="cd00165">
    <property type="entry name" value="S4"/>
    <property type="match status" value="1"/>
</dbReference>
<dbReference type="Gene3D" id="3.10.290.10">
    <property type="entry name" value="RNA-binding S4 domain"/>
    <property type="match status" value="1"/>
</dbReference>
<dbReference type="HAMAP" id="MF_01306_A">
    <property type="entry name" value="Ribosomal_uS4_A"/>
    <property type="match status" value="1"/>
</dbReference>
<dbReference type="InterPro" id="IPR022801">
    <property type="entry name" value="Ribosomal_uS4"/>
</dbReference>
<dbReference type="InterPro" id="IPR022802">
    <property type="entry name" value="Ribosomal_uS4_arc"/>
</dbReference>
<dbReference type="InterPro" id="IPR018079">
    <property type="entry name" value="Ribosomal_uS4_CS"/>
</dbReference>
<dbReference type="InterPro" id="IPR005710">
    <property type="entry name" value="Ribosomal_uS4_euk/arc"/>
</dbReference>
<dbReference type="InterPro" id="IPR001912">
    <property type="entry name" value="Ribosomal_uS4_N"/>
</dbReference>
<dbReference type="InterPro" id="IPR002942">
    <property type="entry name" value="S4_RNA-bd"/>
</dbReference>
<dbReference type="InterPro" id="IPR036986">
    <property type="entry name" value="S4_RNA-bd_sf"/>
</dbReference>
<dbReference type="NCBIfam" id="NF003139">
    <property type="entry name" value="PRK04051.1"/>
    <property type="match status" value="1"/>
</dbReference>
<dbReference type="NCBIfam" id="TIGR01018">
    <property type="entry name" value="uS4_arch"/>
    <property type="match status" value="1"/>
</dbReference>
<dbReference type="PANTHER" id="PTHR11831">
    <property type="entry name" value="30S 40S RIBOSOMAL PROTEIN"/>
    <property type="match status" value="1"/>
</dbReference>
<dbReference type="PANTHER" id="PTHR11831:SF5">
    <property type="entry name" value="40S RIBOSOMAL PROTEIN S9"/>
    <property type="match status" value="1"/>
</dbReference>
<dbReference type="Pfam" id="PF01479">
    <property type="entry name" value="S4"/>
    <property type="match status" value="1"/>
</dbReference>
<dbReference type="SMART" id="SM01390">
    <property type="entry name" value="Ribosomal_S4"/>
    <property type="match status" value="1"/>
</dbReference>
<dbReference type="SMART" id="SM00363">
    <property type="entry name" value="S4"/>
    <property type="match status" value="1"/>
</dbReference>
<dbReference type="SUPFAM" id="SSF55174">
    <property type="entry name" value="Alpha-L RNA-binding motif"/>
    <property type="match status" value="1"/>
</dbReference>
<dbReference type="PROSITE" id="PS00632">
    <property type="entry name" value="RIBOSOMAL_S4"/>
    <property type="match status" value="1"/>
</dbReference>
<dbReference type="PROSITE" id="PS50889">
    <property type="entry name" value="S4"/>
    <property type="match status" value="1"/>
</dbReference>
<proteinExistence type="inferred from homology"/>
<protein>
    <recommendedName>
        <fullName evidence="1">Small ribosomal subunit protein uS4</fullName>
    </recommendedName>
    <alternativeName>
        <fullName evidence="2">30S ribosomal protein S4</fullName>
    </alternativeName>
</protein>
<feature type="chain" id="PRO_1000140806" description="Small ribosomal subunit protein uS4">
    <location>
        <begin position="1"/>
        <end position="159"/>
    </location>
</feature>
<feature type="domain" description="S4 RNA-binding" evidence="1">
    <location>
        <begin position="106"/>
        <end position="158"/>
    </location>
</feature>
<comment type="function">
    <text evidence="1">One of the primary rRNA binding proteins, it binds directly to 16S rRNA where it nucleates assembly of the body of the 30S subunit.</text>
</comment>
<comment type="function">
    <text evidence="1">With S5 and S12 plays an important role in translational accuracy.</text>
</comment>
<comment type="subunit">
    <text evidence="1">Part of the 30S ribosomal subunit. Contacts protein S5. The interaction surface between S4 and S5 is involved in control of translational fidelity.</text>
</comment>
<comment type="similarity">
    <text evidence="1">Belongs to the universal ribosomal protein uS4 family.</text>
</comment>
<organism>
    <name type="scientific">Pyrobaculum neutrophilum (strain DSM 2338 / JCM 9278 / NBRC 100436 / V24Sta)</name>
    <name type="common">Thermoproteus neutrophilus</name>
    <dbReference type="NCBI Taxonomy" id="444157"/>
    <lineage>
        <taxon>Archaea</taxon>
        <taxon>Thermoproteota</taxon>
        <taxon>Thermoprotei</taxon>
        <taxon>Thermoproteales</taxon>
        <taxon>Thermoproteaceae</taxon>
        <taxon>Pyrobaculum</taxon>
    </lineage>
</organism>
<name>RS4_PYRNV</name>